<evidence type="ECO:0000255" key="1">
    <source>
        <dbReference type="HAMAP-Rule" id="MF_00527"/>
    </source>
</evidence>
<protein>
    <recommendedName>
        <fullName evidence="1">Putative 3-methyladenine DNA glycosylase</fullName>
        <ecNumber evidence="1">3.2.2.-</ecNumber>
    </recommendedName>
</protein>
<dbReference type="EC" id="3.2.2.-" evidence="1"/>
<dbReference type="EMBL" id="CP001078">
    <property type="protein sequence ID" value="ACD52634.1"/>
    <property type="molecule type" value="Genomic_DNA"/>
</dbReference>
<dbReference type="RefSeq" id="WP_012450736.1">
    <property type="nucleotide sequence ID" value="NC_010723.1"/>
</dbReference>
<dbReference type="SMR" id="B2UXQ2"/>
<dbReference type="KEGG" id="cbt:CLH_0116"/>
<dbReference type="HOGENOM" id="CLU_060471_0_2_9"/>
<dbReference type="GO" id="GO:0003905">
    <property type="term" value="F:alkylbase DNA N-glycosylase activity"/>
    <property type="evidence" value="ECO:0007669"/>
    <property type="project" value="InterPro"/>
</dbReference>
<dbReference type="GO" id="GO:0003677">
    <property type="term" value="F:DNA binding"/>
    <property type="evidence" value="ECO:0007669"/>
    <property type="project" value="InterPro"/>
</dbReference>
<dbReference type="GO" id="GO:0006284">
    <property type="term" value="P:base-excision repair"/>
    <property type="evidence" value="ECO:0007669"/>
    <property type="project" value="InterPro"/>
</dbReference>
<dbReference type="CDD" id="cd00540">
    <property type="entry name" value="AAG"/>
    <property type="match status" value="1"/>
</dbReference>
<dbReference type="FunFam" id="3.10.300.10:FF:000001">
    <property type="entry name" value="Putative 3-methyladenine DNA glycosylase"/>
    <property type="match status" value="1"/>
</dbReference>
<dbReference type="Gene3D" id="3.10.300.10">
    <property type="entry name" value="Methylpurine-DNA glycosylase (MPG)"/>
    <property type="match status" value="1"/>
</dbReference>
<dbReference type="HAMAP" id="MF_00527">
    <property type="entry name" value="3MGH"/>
    <property type="match status" value="1"/>
</dbReference>
<dbReference type="InterPro" id="IPR011034">
    <property type="entry name" value="Formyl_transferase-like_C_sf"/>
</dbReference>
<dbReference type="InterPro" id="IPR003180">
    <property type="entry name" value="MPG"/>
</dbReference>
<dbReference type="InterPro" id="IPR036995">
    <property type="entry name" value="MPG_sf"/>
</dbReference>
<dbReference type="NCBIfam" id="TIGR00567">
    <property type="entry name" value="3mg"/>
    <property type="match status" value="1"/>
</dbReference>
<dbReference type="NCBIfam" id="NF002001">
    <property type="entry name" value="PRK00802.1-1"/>
    <property type="match status" value="1"/>
</dbReference>
<dbReference type="PANTHER" id="PTHR10429">
    <property type="entry name" value="DNA-3-METHYLADENINE GLYCOSYLASE"/>
    <property type="match status" value="1"/>
</dbReference>
<dbReference type="PANTHER" id="PTHR10429:SF0">
    <property type="entry name" value="DNA-3-METHYLADENINE GLYCOSYLASE"/>
    <property type="match status" value="1"/>
</dbReference>
<dbReference type="Pfam" id="PF02245">
    <property type="entry name" value="Pur_DNA_glyco"/>
    <property type="match status" value="1"/>
</dbReference>
<dbReference type="SUPFAM" id="SSF50486">
    <property type="entry name" value="FMT C-terminal domain-like"/>
    <property type="match status" value="1"/>
</dbReference>
<feature type="chain" id="PRO_1000127756" description="Putative 3-methyladenine DNA glycosylase">
    <location>
        <begin position="1"/>
        <end position="202"/>
    </location>
</feature>
<keyword id="KW-0227">DNA damage</keyword>
<keyword id="KW-0234">DNA repair</keyword>
<keyword id="KW-0378">Hydrolase</keyword>
<comment type="similarity">
    <text evidence="1">Belongs to the DNA glycosylase MPG family.</text>
</comment>
<accession>B2UXQ2</accession>
<name>3MGH_CLOBA</name>
<proteinExistence type="inferred from homology"/>
<sequence length="202" mass="23496">MILNREFYKRDALEVAKGLLGKILVREIDGVILRGKIVETEAYIGSIDKASHAYNGRRTERTEPLFKEGGIAYVYFIYGLYHCFNVISGENDDGQGVLIRALEPLDNFDYISLKRFNKKFEELSTVKKRDLTNGPSKLCMAFEIDKKDNYKVLYEKGDLYIEDSCDNYDITQTTRIGIDYAEEAIDFPWRFYIKDNKYISKK</sequence>
<organism>
    <name type="scientific">Clostridium botulinum (strain Alaska E43 / Type E3)</name>
    <dbReference type="NCBI Taxonomy" id="508767"/>
    <lineage>
        <taxon>Bacteria</taxon>
        <taxon>Bacillati</taxon>
        <taxon>Bacillota</taxon>
        <taxon>Clostridia</taxon>
        <taxon>Eubacteriales</taxon>
        <taxon>Clostridiaceae</taxon>
        <taxon>Clostridium</taxon>
    </lineage>
</organism>
<reference key="1">
    <citation type="submission" date="2008-05" db="EMBL/GenBank/DDBJ databases">
        <title>Complete genome sequence of Clostridium botulinum E3 str. Alaska E43.</title>
        <authorList>
            <person name="Brinkac L.M."/>
            <person name="Brown J.L."/>
            <person name="Bruce D."/>
            <person name="Detter C."/>
            <person name="Munk C."/>
            <person name="Smith L.A."/>
            <person name="Smith T.J."/>
            <person name="Sutton G."/>
            <person name="Brettin T.S."/>
        </authorList>
    </citation>
    <scope>NUCLEOTIDE SEQUENCE [LARGE SCALE GENOMIC DNA]</scope>
    <source>
        <strain>Alaska E43 / Type E3</strain>
    </source>
</reference>
<gene>
    <name type="ordered locus">CLH_0116</name>
</gene>